<evidence type="ECO:0000255" key="1">
    <source>
        <dbReference type="HAMAP-Rule" id="MF_01322"/>
    </source>
</evidence>
<name>RPOC_SALCH</name>
<organism>
    <name type="scientific">Salmonella choleraesuis (strain SC-B67)</name>
    <dbReference type="NCBI Taxonomy" id="321314"/>
    <lineage>
        <taxon>Bacteria</taxon>
        <taxon>Pseudomonadati</taxon>
        <taxon>Pseudomonadota</taxon>
        <taxon>Gammaproteobacteria</taxon>
        <taxon>Enterobacterales</taxon>
        <taxon>Enterobacteriaceae</taxon>
        <taxon>Salmonella</taxon>
    </lineage>
</organism>
<reference key="1">
    <citation type="journal article" date="2005" name="Nucleic Acids Res.">
        <title>The genome sequence of Salmonella enterica serovar Choleraesuis, a highly invasive and resistant zoonotic pathogen.</title>
        <authorList>
            <person name="Chiu C.-H."/>
            <person name="Tang P."/>
            <person name="Chu C."/>
            <person name="Hu S."/>
            <person name="Bao Q."/>
            <person name="Yu J."/>
            <person name="Chou Y.-Y."/>
            <person name="Wang H.-S."/>
            <person name="Lee Y.-S."/>
        </authorList>
    </citation>
    <scope>NUCLEOTIDE SEQUENCE [LARGE SCALE GENOMIC DNA]</scope>
    <source>
        <strain>SC-B67</strain>
    </source>
</reference>
<accession>Q57H68</accession>
<dbReference type="EC" id="2.7.7.6" evidence="1"/>
<dbReference type="EMBL" id="AE017220">
    <property type="protein sequence ID" value="AAX67944.1"/>
    <property type="molecule type" value="Genomic_DNA"/>
</dbReference>
<dbReference type="RefSeq" id="WP_000653965.1">
    <property type="nucleotide sequence ID" value="NC_006905.1"/>
</dbReference>
<dbReference type="SMR" id="Q57H68"/>
<dbReference type="KEGG" id="sec:SCH_4038"/>
<dbReference type="HOGENOM" id="CLU_000524_3_1_6"/>
<dbReference type="Proteomes" id="UP000000538">
    <property type="component" value="Chromosome"/>
</dbReference>
<dbReference type="GO" id="GO:0000428">
    <property type="term" value="C:DNA-directed RNA polymerase complex"/>
    <property type="evidence" value="ECO:0007669"/>
    <property type="project" value="UniProtKB-KW"/>
</dbReference>
<dbReference type="GO" id="GO:0003677">
    <property type="term" value="F:DNA binding"/>
    <property type="evidence" value="ECO:0007669"/>
    <property type="project" value="UniProtKB-UniRule"/>
</dbReference>
<dbReference type="GO" id="GO:0003899">
    <property type="term" value="F:DNA-directed RNA polymerase activity"/>
    <property type="evidence" value="ECO:0007669"/>
    <property type="project" value="UniProtKB-UniRule"/>
</dbReference>
<dbReference type="GO" id="GO:0000287">
    <property type="term" value="F:magnesium ion binding"/>
    <property type="evidence" value="ECO:0007669"/>
    <property type="project" value="UniProtKB-UniRule"/>
</dbReference>
<dbReference type="GO" id="GO:0008270">
    <property type="term" value="F:zinc ion binding"/>
    <property type="evidence" value="ECO:0007669"/>
    <property type="project" value="UniProtKB-UniRule"/>
</dbReference>
<dbReference type="GO" id="GO:0006351">
    <property type="term" value="P:DNA-templated transcription"/>
    <property type="evidence" value="ECO:0007669"/>
    <property type="project" value="UniProtKB-UniRule"/>
</dbReference>
<dbReference type="CDD" id="cd02655">
    <property type="entry name" value="RNAP_beta'_C"/>
    <property type="match status" value="1"/>
</dbReference>
<dbReference type="CDD" id="cd01609">
    <property type="entry name" value="RNAP_beta'_N"/>
    <property type="match status" value="1"/>
</dbReference>
<dbReference type="FunFam" id="1.10.132.30:FF:000003">
    <property type="entry name" value="DNA-directed RNA polymerase subunit beta"/>
    <property type="match status" value="1"/>
</dbReference>
<dbReference type="FunFam" id="1.10.150.390:FF:000002">
    <property type="entry name" value="DNA-directed RNA polymerase subunit beta"/>
    <property type="match status" value="1"/>
</dbReference>
<dbReference type="FunFam" id="1.10.274.100:FF:000002">
    <property type="entry name" value="DNA-directed RNA polymerase subunit beta"/>
    <property type="match status" value="1"/>
</dbReference>
<dbReference type="FunFam" id="1.10.40.90:FF:000001">
    <property type="entry name" value="DNA-directed RNA polymerase subunit beta"/>
    <property type="match status" value="1"/>
</dbReference>
<dbReference type="FunFam" id="2.40.50.100:FF:000012">
    <property type="entry name" value="DNA-directed RNA polymerase subunit beta"/>
    <property type="match status" value="1"/>
</dbReference>
<dbReference type="FunFam" id="2.40.50.100:FF:000016">
    <property type="entry name" value="DNA-directed RNA polymerase subunit beta"/>
    <property type="match status" value="1"/>
</dbReference>
<dbReference type="FunFam" id="2.40.50.100:FF:000019">
    <property type="entry name" value="DNA-directed RNA polymerase subunit beta"/>
    <property type="match status" value="1"/>
</dbReference>
<dbReference type="FunFam" id="4.10.860.120:FF:000001">
    <property type="entry name" value="DNA-directed RNA polymerase subunit beta"/>
    <property type="match status" value="1"/>
</dbReference>
<dbReference type="Gene3D" id="1.10.132.30">
    <property type="match status" value="1"/>
</dbReference>
<dbReference type="Gene3D" id="1.10.150.390">
    <property type="match status" value="1"/>
</dbReference>
<dbReference type="Gene3D" id="1.10.1790.20">
    <property type="match status" value="1"/>
</dbReference>
<dbReference type="Gene3D" id="1.10.40.90">
    <property type="match status" value="1"/>
</dbReference>
<dbReference type="Gene3D" id="2.40.40.20">
    <property type="match status" value="1"/>
</dbReference>
<dbReference type="Gene3D" id="2.40.50.100">
    <property type="match status" value="3"/>
</dbReference>
<dbReference type="Gene3D" id="4.10.860.120">
    <property type="entry name" value="RNA polymerase II, clamp domain"/>
    <property type="match status" value="1"/>
</dbReference>
<dbReference type="Gene3D" id="1.10.274.100">
    <property type="entry name" value="RNA polymerase Rpb1, domain 3"/>
    <property type="match status" value="2"/>
</dbReference>
<dbReference type="HAMAP" id="MF_01322">
    <property type="entry name" value="RNApol_bact_RpoC"/>
    <property type="match status" value="1"/>
</dbReference>
<dbReference type="InterPro" id="IPR045867">
    <property type="entry name" value="DNA-dir_RpoC_beta_prime"/>
</dbReference>
<dbReference type="InterPro" id="IPR012754">
    <property type="entry name" value="DNA-dir_RpoC_beta_prime_bact"/>
</dbReference>
<dbReference type="InterPro" id="IPR000722">
    <property type="entry name" value="RNA_pol_asu"/>
</dbReference>
<dbReference type="InterPro" id="IPR006592">
    <property type="entry name" value="RNA_pol_N"/>
</dbReference>
<dbReference type="InterPro" id="IPR007080">
    <property type="entry name" value="RNA_pol_Rpb1_1"/>
</dbReference>
<dbReference type="InterPro" id="IPR007066">
    <property type="entry name" value="RNA_pol_Rpb1_3"/>
</dbReference>
<dbReference type="InterPro" id="IPR042102">
    <property type="entry name" value="RNA_pol_Rpb1_3_sf"/>
</dbReference>
<dbReference type="InterPro" id="IPR007083">
    <property type="entry name" value="RNA_pol_Rpb1_4"/>
</dbReference>
<dbReference type="InterPro" id="IPR007081">
    <property type="entry name" value="RNA_pol_Rpb1_5"/>
</dbReference>
<dbReference type="InterPro" id="IPR044893">
    <property type="entry name" value="RNA_pol_Rpb1_clamp_domain"/>
</dbReference>
<dbReference type="InterPro" id="IPR038120">
    <property type="entry name" value="Rpb1_funnel_sf"/>
</dbReference>
<dbReference type="NCBIfam" id="TIGR02386">
    <property type="entry name" value="rpoC_TIGR"/>
    <property type="match status" value="1"/>
</dbReference>
<dbReference type="PANTHER" id="PTHR19376">
    <property type="entry name" value="DNA-DIRECTED RNA POLYMERASE"/>
    <property type="match status" value="1"/>
</dbReference>
<dbReference type="PANTHER" id="PTHR19376:SF54">
    <property type="entry name" value="DNA-DIRECTED RNA POLYMERASE SUBUNIT BETA"/>
    <property type="match status" value="1"/>
</dbReference>
<dbReference type="Pfam" id="PF04997">
    <property type="entry name" value="RNA_pol_Rpb1_1"/>
    <property type="match status" value="1"/>
</dbReference>
<dbReference type="Pfam" id="PF00623">
    <property type="entry name" value="RNA_pol_Rpb1_2"/>
    <property type="match status" value="2"/>
</dbReference>
<dbReference type="Pfam" id="PF04983">
    <property type="entry name" value="RNA_pol_Rpb1_3"/>
    <property type="match status" value="1"/>
</dbReference>
<dbReference type="Pfam" id="PF05000">
    <property type="entry name" value="RNA_pol_Rpb1_4"/>
    <property type="match status" value="1"/>
</dbReference>
<dbReference type="Pfam" id="PF04998">
    <property type="entry name" value="RNA_pol_Rpb1_5"/>
    <property type="match status" value="1"/>
</dbReference>
<dbReference type="SMART" id="SM00663">
    <property type="entry name" value="RPOLA_N"/>
    <property type="match status" value="1"/>
</dbReference>
<dbReference type="SUPFAM" id="SSF64484">
    <property type="entry name" value="beta and beta-prime subunits of DNA dependent RNA-polymerase"/>
    <property type="match status" value="1"/>
</dbReference>
<gene>
    <name evidence="1" type="primary">rpoC</name>
    <name type="ordered locus">SCH_4038</name>
</gene>
<sequence length="1407" mass="155234">MKDLLKFLKAQTKTEEFDAIKIALASPDMIRSWSFGEVKKPETINYRTFKPERDGLFCARIFGPVKDYECLCGKYKRLKHRGVICEKCGVEVTQTKVRRERMGHIELASPTAHIWFLKSLPSRIGLLLDMPLRDIERVLYFESYVVIEGGMTNLERQQILTEEQYLDALEEFGDEFDAKMGAEAIQALLKSMDLEQECETLREELNETNSETKRKKLTKRIKLLEAFVQSGNKPEWMILTVLPVLPPDLRPLVPLDGGRFATSDLNDLYRRVINRNNRLKRLLDLAAPDIIVRNEKRMLQEAVDALLDNGRRGRAITGSNKRPLKSLADMIKGKQGRFRQNLLGKRVDYSGRSVITVGPYLRLHQCGLPKKMALELFKPFIYGKLELRGLATTIKAAKKMVEREEAVVWDILDEVIREHPVLLNRAPTLHRLGIQAFEPVLIEGKAIQLHPLVCAAYNADFDGDQMAVHVPLTLEAQLEARALMMSTNNILSPANGEPIIVPSQDVVLGLYYMTRDCVNAKGEGMVLTGPKEAERIYRAGLASLHARVKVRITEYEKDENGEFVAHTSLKDTTVGRAILWMIVPKGLPFSIVNQALGKKAISKMLNTCYRILGLKPTVIFADQTMYTGFAYAARSGASVGIDDMVIPEKKHEIISEAEAEVAEIQEQFQSGLVTAGERYNKVIDIWAAANDRVSKAMMDNLQTETVINRDGQEEQQVSFNSIYMMADSGARGSAAQIRQLAGMRGLMAKPDGSIIETPITANFREGLNVLQYFISTHGARKGLADTALKTANSGYLTRRLVDVAQDLVVTEDDCGTHEGILMTPVIEGGDVKEPLRDRVLGRVTAEDVLKPGTADILVPRNTLLHEQWCDLLEANSVDAVKVRSVVSCDTDFGVCAHCYGRDLARGHIINKGEAIGVIAAQSIGEPGTQLTMRTFHIGGAASRAAAESSIQVKNKGSIKLSNVKSVVNSSGKLVITSRNTELKLIDEFGRTKESYKVPYGAVMAKGDGEQVAGGETVANWDPHTMPVITEVSGFIRFTDMIDGQTITRQTDELTGLSSLVVLDSAERTTGGKDLRPALKIVDAQGNDVLIPGTDMPAQYFLPGKAIVQLEDGVQISSGDTLARIPQESGGTKDITGGLPRVADLFEARRPKEPAILAEIAGIVSFGKETKGKRRLVITPVDGSDPYEEMIPKWRQLNVFEGERVERGDVISDGPEAPHDILRLRGVHAVTRYIVNEVQDVYRLQGVKINDKHIEVIVRQMLRKATIESAGSSDFLEGEQVEYSRVKIANRELEANGKVGATFSRDLLGITKASLATESFISAASFQETTRVLTEAAVAGKRDELRGLKENVIVGRLIPAGTGYAYHQDRMRRRAAGEQPATPQVTAEDASASLAELLNAGLGGSDNE</sequence>
<keyword id="KW-0240">DNA-directed RNA polymerase</keyword>
<keyword id="KW-0460">Magnesium</keyword>
<keyword id="KW-0479">Metal-binding</keyword>
<keyword id="KW-0548">Nucleotidyltransferase</keyword>
<keyword id="KW-0804">Transcription</keyword>
<keyword id="KW-0808">Transferase</keyword>
<keyword id="KW-0862">Zinc</keyword>
<protein>
    <recommendedName>
        <fullName evidence="1">DNA-directed RNA polymerase subunit beta'</fullName>
        <shortName evidence="1">RNAP subunit beta'</shortName>
        <ecNumber evidence="1">2.7.7.6</ecNumber>
    </recommendedName>
    <alternativeName>
        <fullName evidence="1">RNA polymerase subunit beta'</fullName>
    </alternativeName>
    <alternativeName>
        <fullName evidence="1">Transcriptase subunit beta'</fullName>
    </alternativeName>
</protein>
<proteinExistence type="inferred from homology"/>
<comment type="function">
    <text evidence="1">DNA-dependent RNA polymerase catalyzes the transcription of DNA into RNA using the four ribonucleoside triphosphates as substrates.</text>
</comment>
<comment type="catalytic activity">
    <reaction evidence="1">
        <text>RNA(n) + a ribonucleoside 5'-triphosphate = RNA(n+1) + diphosphate</text>
        <dbReference type="Rhea" id="RHEA:21248"/>
        <dbReference type="Rhea" id="RHEA-COMP:14527"/>
        <dbReference type="Rhea" id="RHEA-COMP:17342"/>
        <dbReference type="ChEBI" id="CHEBI:33019"/>
        <dbReference type="ChEBI" id="CHEBI:61557"/>
        <dbReference type="ChEBI" id="CHEBI:140395"/>
        <dbReference type="EC" id="2.7.7.6"/>
    </reaction>
</comment>
<comment type="cofactor">
    <cofactor evidence="1">
        <name>Mg(2+)</name>
        <dbReference type="ChEBI" id="CHEBI:18420"/>
    </cofactor>
    <text evidence="1">Binds 1 Mg(2+) ion per subunit.</text>
</comment>
<comment type="cofactor">
    <cofactor evidence="1">
        <name>Zn(2+)</name>
        <dbReference type="ChEBI" id="CHEBI:29105"/>
    </cofactor>
    <text evidence="1">Binds 2 Zn(2+) ions per subunit.</text>
</comment>
<comment type="subunit">
    <text evidence="1">The RNAP catalytic core consists of 2 alpha, 1 beta, 1 beta' and 1 omega subunit. When a sigma factor is associated with the core the holoenzyme is formed, which can initiate transcription.</text>
</comment>
<comment type="similarity">
    <text evidence="1">Belongs to the RNA polymerase beta' chain family.</text>
</comment>
<feature type="chain" id="PRO_0000225575" description="DNA-directed RNA polymerase subunit beta'">
    <location>
        <begin position="1"/>
        <end position="1407"/>
    </location>
</feature>
<feature type="binding site" evidence="1">
    <location>
        <position position="70"/>
    </location>
    <ligand>
        <name>Zn(2+)</name>
        <dbReference type="ChEBI" id="CHEBI:29105"/>
        <label>1</label>
    </ligand>
</feature>
<feature type="binding site" evidence="1">
    <location>
        <position position="72"/>
    </location>
    <ligand>
        <name>Zn(2+)</name>
        <dbReference type="ChEBI" id="CHEBI:29105"/>
        <label>1</label>
    </ligand>
</feature>
<feature type="binding site" evidence="1">
    <location>
        <position position="85"/>
    </location>
    <ligand>
        <name>Zn(2+)</name>
        <dbReference type="ChEBI" id="CHEBI:29105"/>
        <label>1</label>
    </ligand>
</feature>
<feature type="binding site" evidence="1">
    <location>
        <position position="88"/>
    </location>
    <ligand>
        <name>Zn(2+)</name>
        <dbReference type="ChEBI" id="CHEBI:29105"/>
        <label>1</label>
    </ligand>
</feature>
<feature type="binding site" evidence="1">
    <location>
        <position position="460"/>
    </location>
    <ligand>
        <name>Mg(2+)</name>
        <dbReference type="ChEBI" id="CHEBI:18420"/>
    </ligand>
</feature>
<feature type="binding site" evidence="1">
    <location>
        <position position="462"/>
    </location>
    <ligand>
        <name>Mg(2+)</name>
        <dbReference type="ChEBI" id="CHEBI:18420"/>
    </ligand>
</feature>
<feature type="binding site" evidence="1">
    <location>
        <position position="464"/>
    </location>
    <ligand>
        <name>Mg(2+)</name>
        <dbReference type="ChEBI" id="CHEBI:18420"/>
    </ligand>
</feature>
<feature type="binding site" evidence="1">
    <location>
        <position position="814"/>
    </location>
    <ligand>
        <name>Zn(2+)</name>
        <dbReference type="ChEBI" id="CHEBI:29105"/>
        <label>2</label>
    </ligand>
</feature>
<feature type="binding site" evidence="1">
    <location>
        <position position="888"/>
    </location>
    <ligand>
        <name>Zn(2+)</name>
        <dbReference type="ChEBI" id="CHEBI:29105"/>
        <label>2</label>
    </ligand>
</feature>
<feature type="binding site" evidence="1">
    <location>
        <position position="895"/>
    </location>
    <ligand>
        <name>Zn(2+)</name>
        <dbReference type="ChEBI" id="CHEBI:29105"/>
        <label>2</label>
    </ligand>
</feature>
<feature type="binding site" evidence="1">
    <location>
        <position position="898"/>
    </location>
    <ligand>
        <name>Zn(2+)</name>
        <dbReference type="ChEBI" id="CHEBI:29105"/>
        <label>2</label>
    </ligand>
</feature>